<organism>
    <name type="scientific">Clostridium kluyveri (strain ATCC 8527 / DSM 555 / NBRC 12016 / NCIMB 10680 / K1)</name>
    <dbReference type="NCBI Taxonomy" id="431943"/>
    <lineage>
        <taxon>Bacteria</taxon>
        <taxon>Bacillati</taxon>
        <taxon>Bacillota</taxon>
        <taxon>Clostridia</taxon>
        <taxon>Eubacteriales</taxon>
        <taxon>Clostridiaceae</taxon>
        <taxon>Clostridium</taxon>
    </lineage>
</organism>
<reference key="1">
    <citation type="journal article" date="2008" name="Proc. Natl. Acad. Sci. U.S.A.">
        <title>The genome of Clostridium kluyveri, a strict anaerobe with unique metabolic features.</title>
        <authorList>
            <person name="Seedorf H."/>
            <person name="Fricke W.F."/>
            <person name="Veith B."/>
            <person name="Brueggemann H."/>
            <person name="Liesegang H."/>
            <person name="Strittmatter A."/>
            <person name="Miethke M."/>
            <person name="Buckel W."/>
            <person name="Hinderberger J."/>
            <person name="Li F."/>
            <person name="Hagemeier C."/>
            <person name="Thauer R.K."/>
            <person name="Gottschalk G."/>
        </authorList>
    </citation>
    <scope>NUCLEOTIDE SEQUENCE [LARGE SCALE GENOMIC DNA]</scope>
    <source>
        <strain>ATCC 8527 / DSM 555 / NBRC 12016 / NCIMB 10680 / K1</strain>
    </source>
</reference>
<name>RS20_CLOK5</name>
<feature type="chain" id="PRO_1000081422" description="Small ribosomal subunit protein bS20">
    <location>
        <begin position="1"/>
        <end position="88"/>
    </location>
</feature>
<sequence>MANIKSAKKRIKVIKTKTLRNKIIKSSLKTTIKKFLAAVESGNVEEAKVSFTATVKALDMAASKGVIHKNKASRNKSKLALKLNKLTA</sequence>
<comment type="function">
    <text evidence="1">Binds directly to 16S ribosomal RNA.</text>
</comment>
<comment type="similarity">
    <text evidence="1">Belongs to the bacterial ribosomal protein bS20 family.</text>
</comment>
<accession>A5N6L4</accession>
<gene>
    <name evidence="1" type="primary">rpsT</name>
    <name type="ordered locus">CKL_0894</name>
</gene>
<dbReference type="EMBL" id="CP000673">
    <property type="protein sequence ID" value="EDK32945.1"/>
    <property type="molecule type" value="Genomic_DNA"/>
</dbReference>
<dbReference type="RefSeq" id="WP_012101274.1">
    <property type="nucleotide sequence ID" value="NC_009706.1"/>
</dbReference>
<dbReference type="SMR" id="A5N6L4"/>
<dbReference type="STRING" id="431943.CKL_0894"/>
<dbReference type="KEGG" id="ckl:CKL_0894"/>
<dbReference type="eggNOG" id="COG0268">
    <property type="taxonomic scope" value="Bacteria"/>
</dbReference>
<dbReference type="HOGENOM" id="CLU_160655_0_0_9"/>
<dbReference type="Proteomes" id="UP000002411">
    <property type="component" value="Chromosome"/>
</dbReference>
<dbReference type="GO" id="GO:0005829">
    <property type="term" value="C:cytosol"/>
    <property type="evidence" value="ECO:0007669"/>
    <property type="project" value="TreeGrafter"/>
</dbReference>
<dbReference type="GO" id="GO:0015935">
    <property type="term" value="C:small ribosomal subunit"/>
    <property type="evidence" value="ECO:0007669"/>
    <property type="project" value="TreeGrafter"/>
</dbReference>
<dbReference type="GO" id="GO:0070181">
    <property type="term" value="F:small ribosomal subunit rRNA binding"/>
    <property type="evidence" value="ECO:0007669"/>
    <property type="project" value="TreeGrafter"/>
</dbReference>
<dbReference type="GO" id="GO:0003735">
    <property type="term" value="F:structural constituent of ribosome"/>
    <property type="evidence" value="ECO:0007669"/>
    <property type="project" value="InterPro"/>
</dbReference>
<dbReference type="GO" id="GO:0006412">
    <property type="term" value="P:translation"/>
    <property type="evidence" value="ECO:0007669"/>
    <property type="project" value="UniProtKB-UniRule"/>
</dbReference>
<dbReference type="FunFam" id="1.20.58.110:FF:000001">
    <property type="entry name" value="30S ribosomal protein S20"/>
    <property type="match status" value="1"/>
</dbReference>
<dbReference type="Gene3D" id="1.20.58.110">
    <property type="entry name" value="Ribosomal protein S20"/>
    <property type="match status" value="1"/>
</dbReference>
<dbReference type="HAMAP" id="MF_00500">
    <property type="entry name" value="Ribosomal_bS20"/>
    <property type="match status" value="1"/>
</dbReference>
<dbReference type="InterPro" id="IPR002583">
    <property type="entry name" value="Ribosomal_bS20"/>
</dbReference>
<dbReference type="InterPro" id="IPR036510">
    <property type="entry name" value="Ribosomal_bS20_sf"/>
</dbReference>
<dbReference type="NCBIfam" id="TIGR00029">
    <property type="entry name" value="S20"/>
    <property type="match status" value="1"/>
</dbReference>
<dbReference type="PANTHER" id="PTHR33398">
    <property type="entry name" value="30S RIBOSOMAL PROTEIN S20"/>
    <property type="match status" value="1"/>
</dbReference>
<dbReference type="PANTHER" id="PTHR33398:SF1">
    <property type="entry name" value="SMALL RIBOSOMAL SUBUNIT PROTEIN BS20C"/>
    <property type="match status" value="1"/>
</dbReference>
<dbReference type="Pfam" id="PF01649">
    <property type="entry name" value="Ribosomal_S20p"/>
    <property type="match status" value="1"/>
</dbReference>
<dbReference type="SUPFAM" id="SSF46992">
    <property type="entry name" value="Ribosomal protein S20"/>
    <property type="match status" value="1"/>
</dbReference>
<protein>
    <recommendedName>
        <fullName evidence="1">Small ribosomal subunit protein bS20</fullName>
    </recommendedName>
    <alternativeName>
        <fullName evidence="2">30S ribosomal protein S20</fullName>
    </alternativeName>
</protein>
<keyword id="KW-1185">Reference proteome</keyword>
<keyword id="KW-0687">Ribonucleoprotein</keyword>
<keyword id="KW-0689">Ribosomal protein</keyword>
<keyword id="KW-0694">RNA-binding</keyword>
<keyword id="KW-0699">rRNA-binding</keyword>
<proteinExistence type="inferred from homology"/>
<evidence type="ECO:0000255" key="1">
    <source>
        <dbReference type="HAMAP-Rule" id="MF_00500"/>
    </source>
</evidence>
<evidence type="ECO:0000305" key="2"/>